<accession>B3QQR6</accession>
<organism>
    <name type="scientific">Chlorobaculum parvum (strain DSM 263 / NCIMB 8327)</name>
    <name type="common">Chlorobium vibrioforme subsp. thiosulfatophilum</name>
    <dbReference type="NCBI Taxonomy" id="517417"/>
    <lineage>
        <taxon>Bacteria</taxon>
        <taxon>Pseudomonadati</taxon>
        <taxon>Chlorobiota</taxon>
        <taxon>Chlorobiia</taxon>
        <taxon>Chlorobiales</taxon>
        <taxon>Chlorobiaceae</taxon>
        <taxon>Chlorobaculum</taxon>
    </lineage>
</organism>
<sequence>MAAKVVLDFEKPLYELEEKLSEMRVYLKSGEFDARTESREGLRGEIEALEAKVESLRKTIYKNLTRWQKVQLARHPERPYTLDYIYMMTKDFVELSGDRQFGDDKAIIGGLARLEDKDSGFSQSVMVIGHQKGRDTKSNLYRNFGMAQPEGYRKALRLMKMAEKFGKPVITLIDTPGAFPGIEAEERGQAEAIARNLYEMAGLKVPVICVIIGEGASGGAIGIGVGDRILMAENSWYSVISPESCSSILWRSWNYKEQAAEALKLTADDLLAQGIIDRIVPEPLGGAHQKPEVMASTLKSMLIEELQGLLSKDASTLVDERIAKFSSMGVWNEAEA</sequence>
<name>ACCA_CHLP8</name>
<gene>
    <name evidence="1" type="primary">accA</name>
    <name type="ordered locus">Cpar_1877</name>
</gene>
<feature type="chain" id="PRO_1000134470" description="Acetyl-coenzyme A carboxylase carboxyl transferase subunit alpha">
    <location>
        <begin position="1"/>
        <end position="336"/>
    </location>
</feature>
<feature type="domain" description="CoA carboxyltransferase C-terminal" evidence="2">
    <location>
        <begin position="48"/>
        <end position="308"/>
    </location>
</feature>
<protein>
    <recommendedName>
        <fullName evidence="1">Acetyl-coenzyme A carboxylase carboxyl transferase subunit alpha</fullName>
        <shortName evidence="1">ACCase subunit alpha</shortName>
        <shortName evidence="1">Acetyl-CoA carboxylase carboxyltransferase subunit alpha</shortName>
        <ecNumber evidence="1">2.1.3.15</ecNumber>
    </recommendedName>
</protein>
<evidence type="ECO:0000255" key="1">
    <source>
        <dbReference type="HAMAP-Rule" id="MF_00823"/>
    </source>
</evidence>
<evidence type="ECO:0000255" key="2">
    <source>
        <dbReference type="PROSITE-ProRule" id="PRU01137"/>
    </source>
</evidence>
<reference key="1">
    <citation type="submission" date="2008-06" db="EMBL/GenBank/DDBJ databases">
        <title>Complete sequence of Chlorobaculum parvum NCIB 8327.</title>
        <authorList>
            <consortium name="US DOE Joint Genome Institute"/>
            <person name="Lucas S."/>
            <person name="Copeland A."/>
            <person name="Lapidus A."/>
            <person name="Glavina del Rio T."/>
            <person name="Dalin E."/>
            <person name="Tice H."/>
            <person name="Bruce D."/>
            <person name="Goodwin L."/>
            <person name="Pitluck S."/>
            <person name="Schmutz J."/>
            <person name="Larimer F."/>
            <person name="Land M."/>
            <person name="Hauser L."/>
            <person name="Kyrpides N."/>
            <person name="Mikhailova N."/>
            <person name="Zhao F."/>
            <person name="Li T."/>
            <person name="Liu Z."/>
            <person name="Overmann J."/>
            <person name="Bryant D.A."/>
            <person name="Richardson P."/>
        </authorList>
    </citation>
    <scope>NUCLEOTIDE SEQUENCE [LARGE SCALE GENOMIC DNA]</scope>
    <source>
        <strain>DSM 263 / NCIMB 8327</strain>
    </source>
</reference>
<proteinExistence type="inferred from homology"/>
<dbReference type="EC" id="2.1.3.15" evidence="1"/>
<dbReference type="EMBL" id="CP001099">
    <property type="protein sequence ID" value="ACF12269.1"/>
    <property type="molecule type" value="Genomic_DNA"/>
</dbReference>
<dbReference type="RefSeq" id="WP_012503102.1">
    <property type="nucleotide sequence ID" value="NC_011027.1"/>
</dbReference>
<dbReference type="SMR" id="B3QQR6"/>
<dbReference type="STRING" id="517417.Cpar_1877"/>
<dbReference type="KEGG" id="cpc:Cpar_1877"/>
<dbReference type="eggNOG" id="COG0825">
    <property type="taxonomic scope" value="Bacteria"/>
</dbReference>
<dbReference type="HOGENOM" id="CLU_015486_0_2_10"/>
<dbReference type="OrthoDB" id="9808023at2"/>
<dbReference type="UniPathway" id="UPA00655">
    <property type="reaction ID" value="UER00711"/>
</dbReference>
<dbReference type="Proteomes" id="UP000008811">
    <property type="component" value="Chromosome"/>
</dbReference>
<dbReference type="GO" id="GO:0009317">
    <property type="term" value="C:acetyl-CoA carboxylase complex"/>
    <property type="evidence" value="ECO:0007669"/>
    <property type="project" value="InterPro"/>
</dbReference>
<dbReference type="GO" id="GO:0003989">
    <property type="term" value="F:acetyl-CoA carboxylase activity"/>
    <property type="evidence" value="ECO:0007669"/>
    <property type="project" value="InterPro"/>
</dbReference>
<dbReference type="GO" id="GO:0005524">
    <property type="term" value="F:ATP binding"/>
    <property type="evidence" value="ECO:0007669"/>
    <property type="project" value="UniProtKB-KW"/>
</dbReference>
<dbReference type="GO" id="GO:0016743">
    <property type="term" value="F:carboxyl- or carbamoyltransferase activity"/>
    <property type="evidence" value="ECO:0007669"/>
    <property type="project" value="UniProtKB-UniRule"/>
</dbReference>
<dbReference type="GO" id="GO:0006633">
    <property type="term" value="P:fatty acid biosynthetic process"/>
    <property type="evidence" value="ECO:0007669"/>
    <property type="project" value="UniProtKB-KW"/>
</dbReference>
<dbReference type="GO" id="GO:2001295">
    <property type="term" value="P:malonyl-CoA biosynthetic process"/>
    <property type="evidence" value="ECO:0007669"/>
    <property type="project" value="UniProtKB-UniRule"/>
</dbReference>
<dbReference type="Gene3D" id="3.90.226.10">
    <property type="entry name" value="2-enoyl-CoA Hydratase, Chain A, domain 1"/>
    <property type="match status" value="1"/>
</dbReference>
<dbReference type="HAMAP" id="MF_00823">
    <property type="entry name" value="AcetylCoA_CT_alpha"/>
    <property type="match status" value="1"/>
</dbReference>
<dbReference type="InterPro" id="IPR001095">
    <property type="entry name" value="Acetyl_CoA_COase_a_su"/>
</dbReference>
<dbReference type="InterPro" id="IPR029045">
    <property type="entry name" value="ClpP/crotonase-like_dom_sf"/>
</dbReference>
<dbReference type="InterPro" id="IPR011763">
    <property type="entry name" value="COA_CT_C"/>
</dbReference>
<dbReference type="NCBIfam" id="TIGR00513">
    <property type="entry name" value="accA"/>
    <property type="match status" value="1"/>
</dbReference>
<dbReference type="NCBIfam" id="NF041504">
    <property type="entry name" value="AccA_sub"/>
    <property type="match status" value="1"/>
</dbReference>
<dbReference type="NCBIfam" id="NF004344">
    <property type="entry name" value="PRK05724.1"/>
    <property type="match status" value="1"/>
</dbReference>
<dbReference type="PANTHER" id="PTHR42853">
    <property type="entry name" value="ACETYL-COENZYME A CARBOXYLASE CARBOXYL TRANSFERASE SUBUNIT ALPHA"/>
    <property type="match status" value="1"/>
</dbReference>
<dbReference type="PANTHER" id="PTHR42853:SF3">
    <property type="entry name" value="ACETYL-COENZYME A CARBOXYLASE CARBOXYL TRANSFERASE SUBUNIT ALPHA, CHLOROPLASTIC"/>
    <property type="match status" value="1"/>
</dbReference>
<dbReference type="Pfam" id="PF03255">
    <property type="entry name" value="ACCA"/>
    <property type="match status" value="1"/>
</dbReference>
<dbReference type="PRINTS" id="PR01069">
    <property type="entry name" value="ACCCTRFRASEA"/>
</dbReference>
<dbReference type="SUPFAM" id="SSF52096">
    <property type="entry name" value="ClpP/crotonase"/>
    <property type="match status" value="1"/>
</dbReference>
<dbReference type="PROSITE" id="PS50989">
    <property type="entry name" value="COA_CT_CTER"/>
    <property type="match status" value="1"/>
</dbReference>
<comment type="function">
    <text evidence="1">Component of the acetyl coenzyme A carboxylase (ACC) complex. First, biotin carboxylase catalyzes the carboxylation of biotin on its carrier protein (BCCP) and then the CO(2) group is transferred by the carboxyltransferase to acetyl-CoA to form malonyl-CoA.</text>
</comment>
<comment type="catalytic activity">
    <reaction evidence="1">
        <text>N(6)-carboxybiotinyl-L-lysyl-[protein] + acetyl-CoA = N(6)-biotinyl-L-lysyl-[protein] + malonyl-CoA</text>
        <dbReference type="Rhea" id="RHEA:54728"/>
        <dbReference type="Rhea" id="RHEA-COMP:10505"/>
        <dbReference type="Rhea" id="RHEA-COMP:10506"/>
        <dbReference type="ChEBI" id="CHEBI:57288"/>
        <dbReference type="ChEBI" id="CHEBI:57384"/>
        <dbReference type="ChEBI" id="CHEBI:83144"/>
        <dbReference type="ChEBI" id="CHEBI:83145"/>
        <dbReference type="EC" id="2.1.3.15"/>
    </reaction>
</comment>
<comment type="pathway">
    <text evidence="1">Lipid metabolism; malonyl-CoA biosynthesis; malonyl-CoA from acetyl-CoA: step 1/1.</text>
</comment>
<comment type="subunit">
    <text evidence="1">Acetyl-CoA carboxylase is a heterohexamer composed of biotin carboxyl carrier protein (AccB), biotin carboxylase (AccC) and two subunits each of ACCase subunit alpha (AccA) and ACCase subunit beta (AccD).</text>
</comment>
<comment type="subcellular location">
    <subcellularLocation>
        <location evidence="1">Cytoplasm</location>
    </subcellularLocation>
</comment>
<comment type="similarity">
    <text evidence="1">Belongs to the AccA family.</text>
</comment>
<keyword id="KW-0067">ATP-binding</keyword>
<keyword id="KW-0963">Cytoplasm</keyword>
<keyword id="KW-0275">Fatty acid biosynthesis</keyword>
<keyword id="KW-0276">Fatty acid metabolism</keyword>
<keyword id="KW-0444">Lipid biosynthesis</keyword>
<keyword id="KW-0443">Lipid metabolism</keyword>
<keyword id="KW-0547">Nucleotide-binding</keyword>
<keyword id="KW-0808">Transferase</keyword>